<gene>
    <name type="primary">Fam133b</name>
</gene>
<dbReference type="EMBL" id="BC094528">
    <property type="protein sequence ID" value="AAH94528.1"/>
    <property type="molecule type" value="mRNA"/>
</dbReference>
<dbReference type="RefSeq" id="NP_001019970.1">
    <property type="nucleotide sequence ID" value="NM_001024799.2"/>
</dbReference>
<dbReference type="SMR" id="Q505I5"/>
<dbReference type="FunCoup" id="Q505I5">
    <property type="interactions" value="5"/>
</dbReference>
<dbReference type="STRING" id="10116.ENSRNOP00000012253"/>
<dbReference type="PhosphoSitePlus" id="Q505I5"/>
<dbReference type="PaxDb" id="10116-ENSRNOP00000012253"/>
<dbReference type="GeneID" id="362320"/>
<dbReference type="KEGG" id="rno:362320"/>
<dbReference type="UCSC" id="RGD:1306302">
    <property type="organism name" value="rat"/>
</dbReference>
<dbReference type="AGR" id="RGD:1306302"/>
<dbReference type="CTD" id="257415"/>
<dbReference type="RGD" id="1306302">
    <property type="gene designation" value="Fam133b"/>
</dbReference>
<dbReference type="VEuPathDB" id="HostDB:ENSRNOG00000009163"/>
<dbReference type="eggNOG" id="ENOG502QWN4">
    <property type="taxonomic scope" value="Eukaryota"/>
</dbReference>
<dbReference type="HOGENOM" id="CLU_108741_0_0_1"/>
<dbReference type="InParanoid" id="Q505I5"/>
<dbReference type="OrthoDB" id="10065679at2759"/>
<dbReference type="PhylomeDB" id="Q505I5"/>
<dbReference type="TreeFam" id="TF350193"/>
<dbReference type="PRO" id="PR:Q505I5"/>
<dbReference type="Proteomes" id="UP000002494">
    <property type="component" value="Chromosome 4"/>
</dbReference>
<dbReference type="Bgee" id="ENSRNOG00000009163">
    <property type="expression patterns" value="Expressed in cerebellum and 19 other cell types or tissues"/>
</dbReference>
<dbReference type="InterPro" id="IPR026766">
    <property type="entry name" value="Fam133"/>
</dbReference>
<dbReference type="PANTHER" id="PTHR31911">
    <property type="entry name" value="PROTEIN FAM133"/>
    <property type="match status" value="1"/>
</dbReference>
<dbReference type="PANTHER" id="PTHR31911:SF3">
    <property type="entry name" value="PROTEIN FAM133B"/>
    <property type="match status" value="1"/>
</dbReference>
<organism>
    <name type="scientific">Rattus norvegicus</name>
    <name type="common">Rat</name>
    <dbReference type="NCBI Taxonomy" id="10116"/>
    <lineage>
        <taxon>Eukaryota</taxon>
        <taxon>Metazoa</taxon>
        <taxon>Chordata</taxon>
        <taxon>Craniata</taxon>
        <taxon>Vertebrata</taxon>
        <taxon>Euteleostomi</taxon>
        <taxon>Mammalia</taxon>
        <taxon>Eutheria</taxon>
        <taxon>Euarchontoglires</taxon>
        <taxon>Glires</taxon>
        <taxon>Rodentia</taxon>
        <taxon>Myomorpha</taxon>
        <taxon>Muroidea</taxon>
        <taxon>Muridae</taxon>
        <taxon>Murinae</taxon>
        <taxon>Rattus</taxon>
    </lineage>
</organism>
<keyword id="KW-0597">Phosphoprotein</keyword>
<keyword id="KW-1185">Reference proteome</keyword>
<sequence length="245" mass="28033">MGKRDNRVAYMNPIAMARSRGPIQSSGPTIQDYLNRPRPTWEEVKEQLEKKKKGSKALAEFEEKMNENWKKELEKHREKLLSGNESSSKKRQKKKKEKKKSGRYSSSSSSSSDSSSSSSDSEEEDKKQTKRRKKKKSHCHKSPETSVSDSDSDSKDGSKKKKKSKDITEREKDTKGLSKKRKMYEDKPLSSESLSESDCGEVQAKKKKSGEERERTTDKAKKRRKHKKHSKKKKKKAASSSSDSP</sequence>
<evidence type="ECO:0000250" key="1">
    <source>
        <dbReference type="UniProtKB" id="Q5BKY9"/>
    </source>
</evidence>
<evidence type="ECO:0000256" key="2">
    <source>
        <dbReference type="SAM" id="MobiDB-lite"/>
    </source>
</evidence>
<evidence type="ECO:0000305" key="3"/>
<proteinExistence type="evidence at transcript level"/>
<accession>Q505I5</accession>
<reference key="1">
    <citation type="journal article" date="2004" name="Genome Res.">
        <title>The status, quality, and expansion of the NIH full-length cDNA project: the Mammalian Gene Collection (MGC).</title>
        <authorList>
            <consortium name="The MGC Project Team"/>
        </authorList>
    </citation>
    <scope>NUCLEOTIDE SEQUENCE [LARGE SCALE MRNA]</scope>
    <source>
        <tissue>Brain</tissue>
    </source>
</reference>
<comment type="similarity">
    <text evidence="3">Belongs to the FAM133 family.</text>
</comment>
<protein>
    <recommendedName>
        <fullName>Protein FAM133B</fullName>
    </recommendedName>
</protein>
<feature type="chain" id="PRO_0000287618" description="Protein FAM133B">
    <location>
        <begin position="1"/>
        <end position="245"/>
    </location>
</feature>
<feature type="region of interest" description="Disordered" evidence="2">
    <location>
        <begin position="19"/>
        <end position="38"/>
    </location>
</feature>
<feature type="region of interest" description="Disordered" evidence="2">
    <location>
        <begin position="69"/>
        <end position="245"/>
    </location>
</feature>
<feature type="compositionally biased region" description="Basic and acidic residues" evidence="2">
    <location>
        <begin position="69"/>
        <end position="80"/>
    </location>
</feature>
<feature type="compositionally biased region" description="Basic residues" evidence="2">
    <location>
        <begin position="89"/>
        <end position="102"/>
    </location>
</feature>
<feature type="compositionally biased region" description="Low complexity" evidence="2">
    <location>
        <begin position="103"/>
        <end position="119"/>
    </location>
</feature>
<feature type="compositionally biased region" description="Basic residues" evidence="2">
    <location>
        <begin position="128"/>
        <end position="140"/>
    </location>
</feature>
<feature type="compositionally biased region" description="Basic and acidic residues" evidence="2">
    <location>
        <begin position="165"/>
        <end position="176"/>
    </location>
</feature>
<feature type="compositionally biased region" description="Basic and acidic residues" evidence="2">
    <location>
        <begin position="209"/>
        <end position="219"/>
    </location>
</feature>
<feature type="compositionally biased region" description="Basic residues" evidence="2">
    <location>
        <begin position="220"/>
        <end position="237"/>
    </location>
</feature>
<feature type="modified residue" description="Phosphoserine" evidence="1">
    <location>
        <position position="82"/>
    </location>
</feature>
<feature type="modified residue" description="Phosphoserine" evidence="1">
    <location>
        <position position="190"/>
    </location>
</feature>
<feature type="modified residue" description="Phosphoserine" evidence="1">
    <location>
        <position position="191"/>
    </location>
</feature>
<feature type="modified residue" description="Phosphoserine" evidence="1">
    <location>
        <position position="193"/>
    </location>
</feature>
<feature type="modified residue" description="Phosphoserine" evidence="1">
    <location>
        <position position="195"/>
    </location>
</feature>
<name>F133B_RAT</name>